<gene>
    <name evidence="1" type="primary">metAS</name>
    <name type="ordered locus">YE3882</name>
</gene>
<protein>
    <recommendedName>
        <fullName evidence="1">Homoserine O-succinyltransferase</fullName>
        <shortName evidence="1">HST</shortName>
        <ecNumber evidence="1">2.3.1.46</ecNumber>
    </recommendedName>
    <alternativeName>
        <fullName evidence="1">Homoserine transsuccinylase</fullName>
        <shortName evidence="1">HTS</shortName>
    </alternativeName>
</protein>
<keyword id="KW-0012">Acyltransferase</keyword>
<keyword id="KW-0028">Amino-acid biosynthesis</keyword>
<keyword id="KW-0963">Cytoplasm</keyword>
<keyword id="KW-0486">Methionine biosynthesis</keyword>
<keyword id="KW-0808">Transferase</keyword>
<sequence>MPIRVPDELPAVSFLRNENVFVMTSSRAKTQEIRPLKVLVLNLMPKKIETENQFLRLLSNSPLQIDIQLLRIDSRESKNTPAEHLNNFYCDFEDIQEQNFDGLIVTGAPLGLVDFCDVAYWPQIERIIAWAKDHVTSTLFVCWAVQAALNILYGIPKMTRETKLSGIYQHQTDKPLALLTRGFDETFLAPHSRYADFPVELLQQYTDLDILVSSEEAGAYLFASKDKRVAFVTGHPEYDVDTLAGEYQRDLAAGLNPQIPLNYFPNDDASLPPKASWRSHGHLLFANWLNYYVYQITPFDLRHMNPTLD</sequence>
<feature type="chain" id="PRO_1000021860" description="Homoserine O-succinyltransferase">
    <location>
        <begin position="1"/>
        <end position="309"/>
    </location>
</feature>
<feature type="active site" description="Acyl-thioester intermediate" evidence="1">
    <location>
        <position position="142"/>
    </location>
</feature>
<feature type="active site" description="Proton acceptor" evidence="1">
    <location>
        <position position="235"/>
    </location>
</feature>
<feature type="active site" evidence="1">
    <location>
        <position position="237"/>
    </location>
</feature>
<feature type="binding site" evidence="1">
    <location>
        <position position="163"/>
    </location>
    <ligand>
        <name>substrate</name>
    </ligand>
</feature>
<feature type="binding site" evidence="1">
    <location>
        <position position="192"/>
    </location>
    <ligand>
        <name>substrate</name>
    </ligand>
</feature>
<feature type="binding site" evidence="1">
    <location>
        <position position="249"/>
    </location>
    <ligand>
        <name>substrate</name>
    </ligand>
</feature>
<feature type="site" description="Important for acyl-CoA specificity" evidence="1">
    <location>
        <position position="111"/>
    </location>
</feature>
<feature type="site" description="Important for substrate specificity" evidence="1">
    <location>
        <position position="192"/>
    </location>
</feature>
<organism>
    <name type="scientific">Yersinia enterocolitica serotype O:8 / biotype 1B (strain NCTC 13174 / 8081)</name>
    <dbReference type="NCBI Taxonomy" id="393305"/>
    <lineage>
        <taxon>Bacteria</taxon>
        <taxon>Pseudomonadati</taxon>
        <taxon>Pseudomonadota</taxon>
        <taxon>Gammaproteobacteria</taxon>
        <taxon>Enterobacterales</taxon>
        <taxon>Yersiniaceae</taxon>
        <taxon>Yersinia</taxon>
    </lineage>
</organism>
<proteinExistence type="inferred from homology"/>
<evidence type="ECO:0000255" key="1">
    <source>
        <dbReference type="HAMAP-Rule" id="MF_00295"/>
    </source>
</evidence>
<accession>A1JRX9</accession>
<name>METAS_YERE8</name>
<comment type="function">
    <text evidence="1">Transfers a succinyl group from succinyl-CoA to L-homoserine, forming succinyl-L-homoserine.</text>
</comment>
<comment type="catalytic activity">
    <reaction evidence="1">
        <text>L-homoserine + succinyl-CoA = O-succinyl-L-homoserine + CoA</text>
        <dbReference type="Rhea" id="RHEA:22008"/>
        <dbReference type="ChEBI" id="CHEBI:57287"/>
        <dbReference type="ChEBI" id="CHEBI:57292"/>
        <dbReference type="ChEBI" id="CHEBI:57476"/>
        <dbReference type="ChEBI" id="CHEBI:57661"/>
        <dbReference type="EC" id="2.3.1.46"/>
    </reaction>
</comment>
<comment type="pathway">
    <text evidence="1">Amino-acid biosynthesis; L-methionine biosynthesis via de novo pathway; O-succinyl-L-homoserine from L-homoserine: step 1/1.</text>
</comment>
<comment type="subcellular location">
    <subcellularLocation>
        <location evidence="1">Cytoplasm</location>
    </subcellularLocation>
</comment>
<comment type="similarity">
    <text evidence="1">Belongs to the MetA family.</text>
</comment>
<reference key="1">
    <citation type="journal article" date="2006" name="PLoS Genet.">
        <title>The complete genome sequence and comparative genome analysis of the high pathogenicity Yersinia enterocolitica strain 8081.</title>
        <authorList>
            <person name="Thomson N.R."/>
            <person name="Howard S."/>
            <person name="Wren B.W."/>
            <person name="Holden M.T.G."/>
            <person name="Crossman L."/>
            <person name="Challis G.L."/>
            <person name="Churcher C."/>
            <person name="Mungall K."/>
            <person name="Brooks K."/>
            <person name="Chillingworth T."/>
            <person name="Feltwell T."/>
            <person name="Abdellah Z."/>
            <person name="Hauser H."/>
            <person name="Jagels K."/>
            <person name="Maddison M."/>
            <person name="Moule S."/>
            <person name="Sanders M."/>
            <person name="Whitehead S."/>
            <person name="Quail M.A."/>
            <person name="Dougan G."/>
            <person name="Parkhill J."/>
            <person name="Prentice M.B."/>
        </authorList>
    </citation>
    <scope>NUCLEOTIDE SEQUENCE [LARGE SCALE GENOMIC DNA]</scope>
    <source>
        <strain>NCTC 13174 / 8081</strain>
    </source>
</reference>
<dbReference type="EC" id="2.3.1.46" evidence="1"/>
<dbReference type="EMBL" id="AM286415">
    <property type="protein sequence ID" value="CAL13901.1"/>
    <property type="molecule type" value="Genomic_DNA"/>
</dbReference>
<dbReference type="RefSeq" id="YP_001008027.1">
    <property type="nucleotide sequence ID" value="NC_008800.1"/>
</dbReference>
<dbReference type="SMR" id="A1JRX9"/>
<dbReference type="KEGG" id="yen:YE3882"/>
<dbReference type="PATRIC" id="fig|393305.7.peg.4130"/>
<dbReference type="eggNOG" id="COG1897">
    <property type="taxonomic scope" value="Bacteria"/>
</dbReference>
<dbReference type="HOGENOM" id="CLU_057851_0_1_6"/>
<dbReference type="OrthoDB" id="9772423at2"/>
<dbReference type="UniPathway" id="UPA00051">
    <property type="reaction ID" value="UER00075"/>
</dbReference>
<dbReference type="Proteomes" id="UP000000642">
    <property type="component" value="Chromosome"/>
</dbReference>
<dbReference type="GO" id="GO:0005737">
    <property type="term" value="C:cytoplasm"/>
    <property type="evidence" value="ECO:0007669"/>
    <property type="project" value="UniProtKB-SubCell"/>
</dbReference>
<dbReference type="GO" id="GO:0004414">
    <property type="term" value="F:homoserine O-acetyltransferase activity"/>
    <property type="evidence" value="ECO:0007669"/>
    <property type="project" value="UniProtKB-UniRule"/>
</dbReference>
<dbReference type="GO" id="GO:0008899">
    <property type="term" value="F:homoserine O-succinyltransferase activity"/>
    <property type="evidence" value="ECO:0007669"/>
    <property type="project" value="UniProtKB-EC"/>
</dbReference>
<dbReference type="GO" id="GO:0019281">
    <property type="term" value="P:L-methionine biosynthetic process from homoserine via O-succinyl-L-homoserine and cystathionine"/>
    <property type="evidence" value="ECO:0007669"/>
    <property type="project" value="InterPro"/>
</dbReference>
<dbReference type="CDD" id="cd03131">
    <property type="entry name" value="GATase1_HTS"/>
    <property type="match status" value="1"/>
</dbReference>
<dbReference type="FunFam" id="3.40.50.880:FF:000004">
    <property type="entry name" value="Homoserine O-succinyltransferase"/>
    <property type="match status" value="1"/>
</dbReference>
<dbReference type="Gene3D" id="3.40.50.880">
    <property type="match status" value="1"/>
</dbReference>
<dbReference type="HAMAP" id="MF_00295">
    <property type="entry name" value="MetA_acyltransf"/>
    <property type="match status" value="1"/>
</dbReference>
<dbReference type="InterPro" id="IPR029062">
    <property type="entry name" value="Class_I_gatase-like"/>
</dbReference>
<dbReference type="InterPro" id="IPR005697">
    <property type="entry name" value="HST_MetA"/>
</dbReference>
<dbReference type="InterPro" id="IPR033752">
    <property type="entry name" value="MetA_family"/>
</dbReference>
<dbReference type="NCBIfam" id="TIGR01001">
    <property type="entry name" value="metA"/>
    <property type="match status" value="1"/>
</dbReference>
<dbReference type="PANTHER" id="PTHR20919">
    <property type="entry name" value="HOMOSERINE O-SUCCINYLTRANSFERASE"/>
    <property type="match status" value="1"/>
</dbReference>
<dbReference type="PANTHER" id="PTHR20919:SF0">
    <property type="entry name" value="HOMOSERINE O-SUCCINYLTRANSFERASE"/>
    <property type="match status" value="1"/>
</dbReference>
<dbReference type="Pfam" id="PF04204">
    <property type="entry name" value="HTS"/>
    <property type="match status" value="1"/>
</dbReference>
<dbReference type="PIRSF" id="PIRSF000450">
    <property type="entry name" value="H_ser_succinyltr"/>
    <property type="match status" value="1"/>
</dbReference>
<dbReference type="SUPFAM" id="SSF52317">
    <property type="entry name" value="Class I glutamine amidotransferase-like"/>
    <property type="match status" value="1"/>
</dbReference>